<dbReference type="EC" id="3.5.4.16" evidence="2"/>
<dbReference type="EMBL" id="CP000034">
    <property type="protein sequence ID" value="ABB62217.1"/>
    <property type="molecule type" value="Genomic_DNA"/>
</dbReference>
<dbReference type="RefSeq" id="WP_001139613.1">
    <property type="nucleotide sequence ID" value="NC_007606.1"/>
</dbReference>
<dbReference type="RefSeq" id="YP_403708.1">
    <property type="nucleotide sequence ID" value="NC_007606.1"/>
</dbReference>
<dbReference type="SMR" id="Q32EN8"/>
<dbReference type="STRING" id="300267.SDY_2127"/>
<dbReference type="EnsemblBacteria" id="ABB62217">
    <property type="protein sequence ID" value="ABB62217"/>
    <property type="gene ID" value="SDY_2127"/>
</dbReference>
<dbReference type="GeneID" id="93775029"/>
<dbReference type="KEGG" id="sdy:SDY_2127"/>
<dbReference type="PATRIC" id="fig|300267.13.peg.2564"/>
<dbReference type="HOGENOM" id="CLU_049768_3_2_6"/>
<dbReference type="UniPathway" id="UPA00848">
    <property type="reaction ID" value="UER00151"/>
</dbReference>
<dbReference type="Proteomes" id="UP000002716">
    <property type="component" value="Chromosome"/>
</dbReference>
<dbReference type="GO" id="GO:0005737">
    <property type="term" value="C:cytoplasm"/>
    <property type="evidence" value="ECO:0007669"/>
    <property type="project" value="TreeGrafter"/>
</dbReference>
<dbReference type="GO" id="GO:0005525">
    <property type="term" value="F:GTP binding"/>
    <property type="evidence" value="ECO:0007669"/>
    <property type="project" value="UniProtKB-KW"/>
</dbReference>
<dbReference type="GO" id="GO:0003934">
    <property type="term" value="F:GTP cyclohydrolase I activity"/>
    <property type="evidence" value="ECO:0007669"/>
    <property type="project" value="UniProtKB-UniRule"/>
</dbReference>
<dbReference type="GO" id="GO:0008270">
    <property type="term" value="F:zinc ion binding"/>
    <property type="evidence" value="ECO:0007669"/>
    <property type="project" value="UniProtKB-UniRule"/>
</dbReference>
<dbReference type="GO" id="GO:0006730">
    <property type="term" value="P:one-carbon metabolic process"/>
    <property type="evidence" value="ECO:0007669"/>
    <property type="project" value="UniProtKB-UniRule"/>
</dbReference>
<dbReference type="GO" id="GO:0006729">
    <property type="term" value="P:tetrahydrobiopterin biosynthetic process"/>
    <property type="evidence" value="ECO:0007669"/>
    <property type="project" value="TreeGrafter"/>
</dbReference>
<dbReference type="GO" id="GO:0046654">
    <property type="term" value="P:tetrahydrofolate biosynthetic process"/>
    <property type="evidence" value="ECO:0007669"/>
    <property type="project" value="UniProtKB-UniRule"/>
</dbReference>
<dbReference type="CDD" id="cd00642">
    <property type="entry name" value="GTP_cyclohydro1"/>
    <property type="match status" value="1"/>
</dbReference>
<dbReference type="FunFam" id="1.10.286.10:FF:000002">
    <property type="entry name" value="GTP cyclohydrolase 1"/>
    <property type="match status" value="1"/>
</dbReference>
<dbReference type="FunFam" id="3.30.1130.10:FF:000001">
    <property type="entry name" value="GTP cyclohydrolase 1"/>
    <property type="match status" value="1"/>
</dbReference>
<dbReference type="Gene3D" id="1.10.286.10">
    <property type="match status" value="1"/>
</dbReference>
<dbReference type="Gene3D" id="3.30.1130.10">
    <property type="match status" value="1"/>
</dbReference>
<dbReference type="HAMAP" id="MF_00223">
    <property type="entry name" value="FolE"/>
    <property type="match status" value="1"/>
</dbReference>
<dbReference type="InterPro" id="IPR043133">
    <property type="entry name" value="GTP-CH-I_C/QueF"/>
</dbReference>
<dbReference type="InterPro" id="IPR043134">
    <property type="entry name" value="GTP-CH-I_N"/>
</dbReference>
<dbReference type="InterPro" id="IPR001474">
    <property type="entry name" value="GTP_CycHdrlase_I"/>
</dbReference>
<dbReference type="InterPro" id="IPR018234">
    <property type="entry name" value="GTP_CycHdrlase_I_CS"/>
</dbReference>
<dbReference type="InterPro" id="IPR020602">
    <property type="entry name" value="GTP_CycHdrlase_I_dom"/>
</dbReference>
<dbReference type="NCBIfam" id="TIGR00063">
    <property type="entry name" value="folE"/>
    <property type="match status" value="1"/>
</dbReference>
<dbReference type="NCBIfam" id="NF006824">
    <property type="entry name" value="PRK09347.1-1"/>
    <property type="match status" value="1"/>
</dbReference>
<dbReference type="NCBIfam" id="NF006826">
    <property type="entry name" value="PRK09347.1-3"/>
    <property type="match status" value="1"/>
</dbReference>
<dbReference type="PANTHER" id="PTHR11109:SF7">
    <property type="entry name" value="GTP CYCLOHYDROLASE 1"/>
    <property type="match status" value="1"/>
</dbReference>
<dbReference type="PANTHER" id="PTHR11109">
    <property type="entry name" value="GTP CYCLOHYDROLASE I"/>
    <property type="match status" value="1"/>
</dbReference>
<dbReference type="Pfam" id="PF01227">
    <property type="entry name" value="GTP_cyclohydroI"/>
    <property type="match status" value="1"/>
</dbReference>
<dbReference type="SUPFAM" id="SSF55620">
    <property type="entry name" value="Tetrahydrobiopterin biosynthesis enzymes-like"/>
    <property type="match status" value="1"/>
</dbReference>
<dbReference type="PROSITE" id="PS00859">
    <property type="entry name" value="GTP_CYCLOHYDROL_1_1"/>
    <property type="match status" value="1"/>
</dbReference>
<dbReference type="PROSITE" id="PS00860">
    <property type="entry name" value="GTP_CYCLOHYDROL_1_2"/>
    <property type="match status" value="1"/>
</dbReference>
<sequence length="222" mass="24831">MPSLSKEAALVHEALVARGLETPLRPPVHEMDNETRKSLIAGHMTEIMQLLNLDLADDSLMETPHRIAKMYVDEIFSGLDYANFPKITLIENKMKVDEMVTVRDITLTSTCEHHFVTIDGKATVAYIPKDSVIGLSKINRIVQFFAQRPQVQERLTQQILIALQTLLGTNNVAVSIDAVHYCVKARGIRDATSATTTTSLGGLFKSSQNTRHEFLRAVRHHN</sequence>
<evidence type="ECO:0000250" key="1"/>
<evidence type="ECO:0000255" key="2">
    <source>
        <dbReference type="HAMAP-Rule" id="MF_00223"/>
    </source>
</evidence>
<protein>
    <recommendedName>
        <fullName evidence="2">GTP cyclohydrolase 1</fullName>
        <ecNumber evidence="2">3.5.4.16</ecNumber>
    </recommendedName>
    <alternativeName>
        <fullName evidence="2">GTP cyclohydrolase I</fullName>
        <shortName evidence="2">GTP-CH-I</shortName>
    </alternativeName>
</protein>
<accession>Q32EN8</accession>
<gene>
    <name evidence="2" type="primary">folE</name>
    <name type="ordered locus">SDY_2127</name>
</gene>
<name>GCH1_SHIDS</name>
<organism>
    <name type="scientific">Shigella dysenteriae serotype 1 (strain Sd197)</name>
    <dbReference type="NCBI Taxonomy" id="300267"/>
    <lineage>
        <taxon>Bacteria</taxon>
        <taxon>Pseudomonadati</taxon>
        <taxon>Pseudomonadota</taxon>
        <taxon>Gammaproteobacteria</taxon>
        <taxon>Enterobacterales</taxon>
        <taxon>Enterobacteriaceae</taxon>
        <taxon>Shigella</taxon>
    </lineage>
</organism>
<reference key="1">
    <citation type="journal article" date="2005" name="Nucleic Acids Res.">
        <title>Genome dynamics and diversity of Shigella species, the etiologic agents of bacillary dysentery.</title>
        <authorList>
            <person name="Yang F."/>
            <person name="Yang J."/>
            <person name="Zhang X."/>
            <person name="Chen L."/>
            <person name="Jiang Y."/>
            <person name="Yan Y."/>
            <person name="Tang X."/>
            <person name="Wang J."/>
            <person name="Xiong Z."/>
            <person name="Dong J."/>
            <person name="Xue Y."/>
            <person name="Zhu Y."/>
            <person name="Xu X."/>
            <person name="Sun L."/>
            <person name="Chen S."/>
            <person name="Nie H."/>
            <person name="Peng J."/>
            <person name="Xu J."/>
            <person name="Wang Y."/>
            <person name="Yuan Z."/>
            <person name="Wen Y."/>
            <person name="Yao Z."/>
            <person name="Shen Y."/>
            <person name="Qiang B."/>
            <person name="Hou Y."/>
            <person name="Yu J."/>
            <person name="Jin Q."/>
        </authorList>
    </citation>
    <scope>NUCLEOTIDE SEQUENCE [LARGE SCALE GENOMIC DNA]</scope>
    <source>
        <strain>Sd197</strain>
    </source>
</reference>
<comment type="catalytic activity">
    <reaction evidence="2">
        <text>GTP + H2O = 7,8-dihydroneopterin 3'-triphosphate + formate + H(+)</text>
        <dbReference type="Rhea" id="RHEA:17473"/>
        <dbReference type="ChEBI" id="CHEBI:15377"/>
        <dbReference type="ChEBI" id="CHEBI:15378"/>
        <dbReference type="ChEBI" id="CHEBI:15740"/>
        <dbReference type="ChEBI" id="CHEBI:37565"/>
        <dbReference type="ChEBI" id="CHEBI:58462"/>
        <dbReference type="EC" id="3.5.4.16"/>
    </reaction>
</comment>
<comment type="pathway">
    <text evidence="2">Cofactor biosynthesis; 7,8-dihydroneopterin triphosphate biosynthesis; 7,8-dihydroneopterin triphosphate from GTP: step 1/1.</text>
</comment>
<comment type="subunit">
    <text evidence="1">Toroid-shaped homodecamer, composed of two pentamers of five dimers.</text>
</comment>
<comment type="similarity">
    <text evidence="2">Belongs to the GTP cyclohydrolase I family.</text>
</comment>
<feature type="chain" id="PRO_1000043739" description="GTP cyclohydrolase 1">
    <location>
        <begin position="1"/>
        <end position="222"/>
    </location>
</feature>
<feature type="binding site" evidence="2">
    <location>
        <position position="111"/>
    </location>
    <ligand>
        <name>Zn(2+)</name>
        <dbReference type="ChEBI" id="CHEBI:29105"/>
    </ligand>
</feature>
<feature type="binding site" evidence="2">
    <location>
        <position position="114"/>
    </location>
    <ligand>
        <name>Zn(2+)</name>
        <dbReference type="ChEBI" id="CHEBI:29105"/>
    </ligand>
</feature>
<feature type="binding site" evidence="2">
    <location>
        <position position="182"/>
    </location>
    <ligand>
        <name>Zn(2+)</name>
        <dbReference type="ChEBI" id="CHEBI:29105"/>
    </ligand>
</feature>
<keyword id="KW-0342">GTP-binding</keyword>
<keyword id="KW-0378">Hydrolase</keyword>
<keyword id="KW-0479">Metal-binding</keyword>
<keyword id="KW-0547">Nucleotide-binding</keyword>
<keyword id="KW-0554">One-carbon metabolism</keyword>
<keyword id="KW-1185">Reference proteome</keyword>
<keyword id="KW-0862">Zinc</keyword>
<proteinExistence type="inferred from homology"/>